<accession>Q07DV9</accession>
<evidence type="ECO:0000250" key="1"/>
<evidence type="ECO:0000250" key="2">
    <source>
        <dbReference type="UniProtKB" id="P41350"/>
    </source>
</evidence>
<evidence type="ECO:0000250" key="3">
    <source>
        <dbReference type="UniProtKB" id="P49817"/>
    </source>
</evidence>
<evidence type="ECO:0000250" key="4">
    <source>
        <dbReference type="UniProtKB" id="Q03135"/>
    </source>
</evidence>
<evidence type="ECO:0000250" key="5">
    <source>
        <dbReference type="UniProtKB" id="Q2IBA5"/>
    </source>
</evidence>
<evidence type="ECO:0000255" key="6"/>
<evidence type="ECO:0000305" key="7"/>
<comment type="function">
    <text evidence="3 4">May act as a scaffolding protein within caveolar membranes. Forms a stable heterooligomeric complex with CAV2 that targets to lipid rafts and drives caveolae formation. Mediates the recruitment of CAVIN proteins (CAVIN1/2/3/4) to the caveolae (By similarity). Interacts directly with G-protein alpha subunits and can functionally regulate their activity (By similarity). Involved in the costimulatory signal essential for T-cell receptor (TCR)-mediated T-cell activation. Its binding to DPP4 induces T-cell proliferation and NF-kappa-B activation in a T-cell receptor/CD3-dependent manner (By similarity). Recruits CTNNB1 to caveolar membranes and may regulate CTNNB1-mediated signaling through the Wnt pathway (By similarity). Negatively regulates TGFB1-mediated activation of SMAD2/3 by mediating the internalization of TGFBR1 from membrane rafts leading to its subsequent degradation (By similarity). Binds 20(S)-hydroxycholesterol (20(S)-OHC) (By similarity).</text>
</comment>
<comment type="subunit">
    <text evidence="2 3 4 5">Homooligomer. Interacts with GLIPR2. Interacts with NOSTRIN (By similarity). Interacts with SNAP25 and STX1A (By similarity). Interacts (via the N-terminus) with DPP4; the interaction is direct (By similarity). Interacts with CTNNB1, CDH1 and JUP. Interacts with PACSIN2; this interaction induces membrane tubulation (By similarity). Interacts with SLC7A9 (By similarity). Interacts with BMX and BTK. Interacts with TGFBR1. Interacts with CAVIN3 (via leucine-zipper domain) in a cholesterol-sensitive manner. Interacts with CAVIN1. Interacts with EHD2 in a cholesterol-dependent manner. Forms a ternary complex with UBXN6 and VCP; mediates CAV1 targeting to lysosomes for degradation. Interacts with ABCG1; this interaction regulates ABCG1-mediated cholesterol efflux (By similarity). Interacts with NEU3; this interaction enhances NEU3 sialidase activity within caveola. Interacts (via C-terminus) with SPRY1, SPRY2 (via C-terminus), SPRY3, and SPRY4 (By similarity). Interacts with IGFBP5; this interaction allows trafficking of IGFBP5 from the plasma membrane to the nucleus (By similarity).</text>
</comment>
<comment type="subcellular location">
    <subcellularLocation>
        <location evidence="1">Golgi apparatus membrane</location>
        <topology evidence="1">Peripheral membrane protein</topology>
    </subcellularLocation>
    <subcellularLocation>
        <location evidence="1">Cell membrane</location>
        <topology evidence="1">Peripheral membrane protein</topology>
    </subcellularLocation>
    <subcellularLocation>
        <location evidence="3">Membrane</location>
        <location evidence="3">Caveola</location>
        <topology evidence="1">Peripheral membrane protein</topology>
    </subcellularLocation>
    <subcellularLocation>
        <location evidence="4">Membrane raft</location>
    </subcellularLocation>
    <text evidence="1">Colocalized with DPP4 in membrane rafts. Potential hairpin-like structure in the membrane. Membrane protein of caveolae (By similarity).</text>
</comment>
<comment type="PTM">
    <text evidence="4">Phosphorylated at Tyr-14 by ABL1 in response to oxidative stress.</text>
</comment>
<comment type="PTM">
    <text evidence="4">Ubiquitinated. Undergo monoubiquitination and multi- and/or polyubiquitination. Monoubiquitination of N-terminal lysines promotes integration in a ternary complex with UBXN6 and VCP which promotes oligomeric CAV1 targeting to lysosomes for degradation. Ubiquitinated by ZNRF1; leading to degradation and modulation of the TLR4-mediated immune response.</text>
</comment>
<comment type="similarity">
    <text evidence="7">Belongs to the caveolin family.</text>
</comment>
<protein>
    <recommendedName>
        <fullName>Caveolin-1</fullName>
    </recommendedName>
</protein>
<organism>
    <name type="scientific">Aotus nancymaae</name>
    <name type="common">Ma's night monkey</name>
    <dbReference type="NCBI Taxonomy" id="37293"/>
    <lineage>
        <taxon>Eukaryota</taxon>
        <taxon>Metazoa</taxon>
        <taxon>Chordata</taxon>
        <taxon>Craniata</taxon>
        <taxon>Vertebrata</taxon>
        <taxon>Euteleostomi</taxon>
        <taxon>Mammalia</taxon>
        <taxon>Eutheria</taxon>
        <taxon>Euarchontoglires</taxon>
        <taxon>Primates</taxon>
        <taxon>Haplorrhini</taxon>
        <taxon>Platyrrhini</taxon>
        <taxon>Aotidae</taxon>
        <taxon>Aotus</taxon>
    </lineage>
</organism>
<gene>
    <name type="primary">CAV1</name>
</gene>
<name>CAV1_AOTNA</name>
<proteinExistence type="inferred from homology"/>
<dbReference type="EMBL" id="DP000197">
    <property type="protein sequence ID" value="ABJ08883.1"/>
    <property type="molecule type" value="Genomic_DNA"/>
</dbReference>
<dbReference type="RefSeq" id="XP_012312407.2">
    <property type="nucleotide sequence ID" value="XM_012456984.3"/>
</dbReference>
<dbReference type="STRING" id="37293.ENSANAP00000020935"/>
<dbReference type="GeneID" id="105720432"/>
<dbReference type="Proteomes" id="UP000233020">
    <property type="component" value="Whole Genome Shotgun Assembly"/>
</dbReference>
<dbReference type="GO" id="GO:0005901">
    <property type="term" value="C:caveola"/>
    <property type="evidence" value="ECO:0000250"/>
    <property type="project" value="UniProtKB"/>
</dbReference>
<dbReference type="GO" id="GO:0005768">
    <property type="term" value="C:endosome"/>
    <property type="evidence" value="ECO:0000250"/>
    <property type="project" value="UniProtKB"/>
</dbReference>
<dbReference type="GO" id="GO:0005925">
    <property type="term" value="C:focal adhesion"/>
    <property type="evidence" value="ECO:0007669"/>
    <property type="project" value="TreeGrafter"/>
</dbReference>
<dbReference type="GO" id="GO:0000139">
    <property type="term" value="C:Golgi membrane"/>
    <property type="evidence" value="ECO:0007669"/>
    <property type="project" value="UniProtKB-SubCell"/>
</dbReference>
<dbReference type="GO" id="GO:0045121">
    <property type="term" value="C:membrane raft"/>
    <property type="evidence" value="ECO:0000250"/>
    <property type="project" value="UniProtKB"/>
</dbReference>
<dbReference type="GO" id="GO:0048471">
    <property type="term" value="C:perinuclear region of cytoplasm"/>
    <property type="evidence" value="ECO:0007669"/>
    <property type="project" value="TreeGrafter"/>
</dbReference>
<dbReference type="GO" id="GO:0042383">
    <property type="term" value="C:sarcolemma"/>
    <property type="evidence" value="ECO:0007669"/>
    <property type="project" value="TreeGrafter"/>
</dbReference>
<dbReference type="GO" id="GO:0060090">
    <property type="term" value="F:molecular adaptor activity"/>
    <property type="evidence" value="ECO:0007669"/>
    <property type="project" value="TreeGrafter"/>
</dbReference>
<dbReference type="GO" id="GO:0008142">
    <property type="term" value="F:oxysterol binding"/>
    <property type="evidence" value="ECO:0000250"/>
    <property type="project" value="UniProtKB"/>
</dbReference>
<dbReference type="GO" id="GO:0019901">
    <property type="term" value="F:protein kinase binding"/>
    <property type="evidence" value="ECO:0007669"/>
    <property type="project" value="TreeGrafter"/>
</dbReference>
<dbReference type="GO" id="GO:0044325">
    <property type="term" value="F:transmembrane transporter binding"/>
    <property type="evidence" value="ECO:0007669"/>
    <property type="project" value="TreeGrafter"/>
</dbReference>
<dbReference type="GO" id="GO:0070836">
    <property type="term" value="P:caveola assembly"/>
    <property type="evidence" value="ECO:0007669"/>
    <property type="project" value="InterPro"/>
</dbReference>
<dbReference type="GO" id="GO:0030154">
    <property type="term" value="P:cell differentiation"/>
    <property type="evidence" value="ECO:0007669"/>
    <property type="project" value="TreeGrafter"/>
</dbReference>
<dbReference type="GO" id="GO:0001937">
    <property type="term" value="P:negative regulation of endothelial cell proliferation"/>
    <property type="evidence" value="ECO:0007669"/>
    <property type="project" value="TreeGrafter"/>
</dbReference>
<dbReference type="GO" id="GO:0031623">
    <property type="term" value="P:receptor internalization"/>
    <property type="evidence" value="ECO:0000250"/>
    <property type="project" value="UniProtKB"/>
</dbReference>
<dbReference type="GO" id="GO:0051480">
    <property type="term" value="P:regulation of cytosolic calcium ion concentration"/>
    <property type="evidence" value="ECO:0007669"/>
    <property type="project" value="TreeGrafter"/>
</dbReference>
<dbReference type="GO" id="GO:0031295">
    <property type="term" value="P:T cell costimulation"/>
    <property type="evidence" value="ECO:0000250"/>
    <property type="project" value="UniProtKB"/>
</dbReference>
<dbReference type="InterPro" id="IPR001612">
    <property type="entry name" value="Caveolin"/>
</dbReference>
<dbReference type="InterPro" id="IPR018361">
    <property type="entry name" value="Caveolin_CS"/>
</dbReference>
<dbReference type="PANTHER" id="PTHR10844">
    <property type="entry name" value="CAVEOLIN"/>
    <property type="match status" value="1"/>
</dbReference>
<dbReference type="PANTHER" id="PTHR10844:SF18">
    <property type="entry name" value="CAVEOLIN-1"/>
    <property type="match status" value="1"/>
</dbReference>
<dbReference type="Pfam" id="PF01146">
    <property type="entry name" value="Caveolin"/>
    <property type="match status" value="1"/>
</dbReference>
<dbReference type="PROSITE" id="PS01210">
    <property type="entry name" value="CAVEOLIN"/>
    <property type="match status" value="1"/>
</dbReference>
<sequence length="178" mass="20473">MSGGKYVDSEGHLYTVPIREQGNIYKPNNKAMADELSEKQVYDAHTKEIDLVNRDPKHLNDDVVKIDFEDVIAEPEGTHSFDGIWKASFTTFTVTKYWFYRLLSALFGIPMALIWGIYFAILSFLHIWAVVPCIKSFLIEIQCISRVYSIYIHTVCDPLFEAIGKIFSNVRISLQKEI</sequence>
<reference key="1">
    <citation type="submission" date="2006-09" db="EMBL/GenBank/DDBJ databases">
        <title>NISC comparative sequencing initiative.</title>
        <authorList>
            <person name="Antonellis A."/>
            <person name="Ayele K."/>
            <person name="Benjamin B."/>
            <person name="Blakesley R.W."/>
            <person name="Boakye A."/>
            <person name="Bouffard G.G."/>
            <person name="Brinkley C."/>
            <person name="Brooks S."/>
            <person name="Chu G."/>
            <person name="Coleman H."/>
            <person name="Engle J."/>
            <person name="Gestole M."/>
            <person name="Greene A."/>
            <person name="Guan X."/>
            <person name="Gupta J."/>
            <person name="Haghighi P."/>
            <person name="Han J."/>
            <person name="Hansen N."/>
            <person name="Ho S.-L."/>
            <person name="Hu P."/>
            <person name="Hunter G."/>
            <person name="Hurle B."/>
            <person name="Idol J.R."/>
            <person name="Kwong P."/>
            <person name="Laric P."/>
            <person name="Larson S."/>
            <person name="Lee-Lin S.-Q."/>
            <person name="Legaspi R."/>
            <person name="Madden M."/>
            <person name="Maduro Q.L."/>
            <person name="Maduro V.B."/>
            <person name="Margulies E.H."/>
            <person name="Masiello C."/>
            <person name="Maskeri B."/>
            <person name="McDowell J."/>
            <person name="Mojidi H.A."/>
            <person name="Mullikin J.C."/>
            <person name="Oestreicher J.S."/>
            <person name="Park M."/>
            <person name="Portnoy M.E."/>
            <person name="Prasad A."/>
            <person name="Puri O."/>
            <person name="Reddix-Dugue N."/>
            <person name="Schandler K."/>
            <person name="Schueler M.G."/>
            <person name="Sison C."/>
            <person name="Stantripop S."/>
            <person name="Stephen E."/>
            <person name="Taye A."/>
            <person name="Thomas J.W."/>
            <person name="Thomas P.J."/>
            <person name="Tsipouri V."/>
            <person name="Ung L."/>
            <person name="Vogt J.L."/>
            <person name="Wetherby K.D."/>
            <person name="Young A."/>
            <person name="Green E.D."/>
        </authorList>
    </citation>
    <scope>NUCLEOTIDE SEQUENCE [LARGE SCALE GENOMIC DNA]</scope>
</reference>
<keyword id="KW-0007">Acetylation</keyword>
<keyword id="KW-1003">Cell membrane</keyword>
<keyword id="KW-0333">Golgi apparatus</keyword>
<keyword id="KW-1017">Isopeptide bond</keyword>
<keyword id="KW-0449">Lipoprotein</keyword>
<keyword id="KW-0472">Membrane</keyword>
<keyword id="KW-0564">Palmitate</keyword>
<keyword id="KW-0597">Phosphoprotein</keyword>
<keyword id="KW-1185">Reference proteome</keyword>
<keyword id="KW-0832">Ubl conjugation</keyword>
<feature type="initiator methionine" description="Removed" evidence="4">
    <location>
        <position position="1"/>
    </location>
</feature>
<feature type="chain" id="PRO_0000260364" description="Caveolin-1">
    <location>
        <begin position="2"/>
        <end position="178"/>
    </location>
</feature>
<feature type="topological domain" description="Cytoplasmic" evidence="6">
    <location>
        <begin position="2"/>
        <end position="104"/>
    </location>
</feature>
<feature type="intramembrane region" description="Helical" evidence="6">
    <location>
        <begin position="105"/>
        <end position="125"/>
    </location>
</feature>
<feature type="topological domain" description="Cytoplasmic" evidence="6">
    <location>
        <begin position="126"/>
        <end position="178"/>
    </location>
</feature>
<feature type="region of interest" description="Required for homooligomerization" evidence="4">
    <location>
        <begin position="2"/>
        <end position="94"/>
    </location>
</feature>
<feature type="region of interest" description="Interaction with CAVIN3" evidence="4">
    <location>
        <begin position="82"/>
        <end position="94"/>
    </location>
</feature>
<feature type="region of interest" description="Interacts with SPRY1, SPRY2, SPRY3 and SPRY4" evidence="3">
    <location>
        <begin position="131"/>
        <end position="142"/>
    </location>
</feature>
<feature type="region of interest" description="Interacts with SPRY1, SPRY2, and SPRY4" evidence="3">
    <location>
        <begin position="149"/>
        <end position="160"/>
    </location>
</feature>
<feature type="region of interest" description="Interacts with SPRY1, SPRY2, SPRY3 and SPRY4" evidence="3">
    <location>
        <begin position="167"/>
        <end position="178"/>
    </location>
</feature>
<feature type="modified residue" description="N-acetylserine" evidence="4">
    <location>
        <position position="2"/>
    </location>
</feature>
<feature type="modified residue" description="Phosphoserine" evidence="2">
    <location>
        <position position="2"/>
    </location>
</feature>
<feature type="modified residue" description="N6-acetyllysine; alternate" evidence="4">
    <location>
        <position position="5"/>
    </location>
</feature>
<feature type="modified residue" description="Phosphotyrosine" evidence="4">
    <location>
        <position position="6"/>
    </location>
</feature>
<feature type="modified residue" description="Phosphoserine" evidence="3">
    <location>
        <position position="9"/>
    </location>
</feature>
<feature type="modified residue" description="Phosphotyrosine; by ABL1" evidence="3">
    <location>
        <position position="14"/>
    </location>
</feature>
<feature type="modified residue" description="Phosphotyrosine" evidence="4">
    <location>
        <position position="25"/>
    </location>
</feature>
<feature type="modified residue" description="Phosphoserine" evidence="4">
    <location>
        <position position="37"/>
    </location>
</feature>
<feature type="lipid moiety-binding region" description="S-palmitoyl cysteine" evidence="1">
    <location>
        <position position="133"/>
    </location>
</feature>
<feature type="lipid moiety-binding region" description="S-palmitoyl cysteine" evidence="1">
    <location>
        <position position="143"/>
    </location>
</feature>
<feature type="lipid moiety-binding region" description="S-palmitoyl cysteine" evidence="1">
    <location>
        <position position="156"/>
    </location>
</feature>
<feature type="cross-link" description="Glycyl lysine isopeptide (Lys-Gly) (interchain with G-Cter in ubiquitin); alternate" evidence="4">
    <location>
        <position position="5"/>
    </location>
</feature>
<feature type="cross-link" description="Glycyl lysine isopeptide (Lys-Gly) (interchain with G-Cter in ubiquitin)" evidence="4">
    <location>
        <position position="26"/>
    </location>
</feature>
<feature type="cross-link" description="Glycyl lysine isopeptide (Lys-Gly) (interchain with G-Cter in ubiquitin)" evidence="4">
    <location>
        <position position="30"/>
    </location>
</feature>
<feature type="cross-link" description="Glycyl lysine isopeptide (Lys-Gly) (interchain with G-Cter in ubiquitin)" evidence="4">
    <location>
        <position position="39"/>
    </location>
</feature>
<feature type="cross-link" description="Glycyl lysine isopeptide (Lys-Gly) (interchain with G-Cter in ubiquitin)" evidence="4">
    <location>
        <position position="47"/>
    </location>
</feature>
<feature type="cross-link" description="Glycyl lysine isopeptide (Lys-Gly) (interchain with G-Cter in ubiquitin)" evidence="4">
    <location>
        <position position="57"/>
    </location>
</feature>